<keyword id="KW-0687">Ribonucleoprotein</keyword>
<keyword id="KW-0689">Ribosomal protein</keyword>
<reference key="1">
    <citation type="journal article" date="2010" name="Genome Biol. Evol.">
        <title>Continuing evolution of Burkholderia mallei through genome reduction and large-scale rearrangements.</title>
        <authorList>
            <person name="Losada L."/>
            <person name="Ronning C.M."/>
            <person name="DeShazer D."/>
            <person name="Woods D."/>
            <person name="Fedorova N."/>
            <person name="Kim H.S."/>
            <person name="Shabalina S.A."/>
            <person name="Pearson T.R."/>
            <person name="Brinkac L."/>
            <person name="Tan P."/>
            <person name="Nandi T."/>
            <person name="Crabtree J."/>
            <person name="Badger J."/>
            <person name="Beckstrom-Sternberg S."/>
            <person name="Saqib M."/>
            <person name="Schutzer S.E."/>
            <person name="Keim P."/>
            <person name="Nierman W.C."/>
        </authorList>
    </citation>
    <scope>NUCLEOTIDE SEQUENCE [LARGE SCALE GENOMIC DNA]</scope>
    <source>
        <strain>1710b</strain>
    </source>
</reference>
<name>RS16_BURP1</name>
<dbReference type="EMBL" id="CP000124">
    <property type="protein sequence ID" value="ABA49828.1"/>
    <property type="molecule type" value="Genomic_DNA"/>
</dbReference>
<dbReference type="RefSeq" id="WP_004189402.1">
    <property type="nucleotide sequence ID" value="NC_007434.1"/>
</dbReference>
<dbReference type="SMR" id="Q3JQ06"/>
<dbReference type="EnsemblBacteria" id="ABA49828">
    <property type="protein sequence ID" value="ABA49828"/>
    <property type="gene ID" value="BURPS1710b_2968"/>
</dbReference>
<dbReference type="GeneID" id="93061079"/>
<dbReference type="KEGG" id="bpm:BURPS1710b_2968"/>
<dbReference type="HOGENOM" id="CLU_100590_5_1_4"/>
<dbReference type="Proteomes" id="UP000002700">
    <property type="component" value="Chromosome I"/>
</dbReference>
<dbReference type="GO" id="GO:0005737">
    <property type="term" value="C:cytoplasm"/>
    <property type="evidence" value="ECO:0007669"/>
    <property type="project" value="UniProtKB-ARBA"/>
</dbReference>
<dbReference type="GO" id="GO:0015935">
    <property type="term" value="C:small ribosomal subunit"/>
    <property type="evidence" value="ECO:0007669"/>
    <property type="project" value="TreeGrafter"/>
</dbReference>
<dbReference type="GO" id="GO:0003735">
    <property type="term" value="F:structural constituent of ribosome"/>
    <property type="evidence" value="ECO:0007669"/>
    <property type="project" value="InterPro"/>
</dbReference>
<dbReference type="GO" id="GO:0006412">
    <property type="term" value="P:translation"/>
    <property type="evidence" value="ECO:0007669"/>
    <property type="project" value="UniProtKB-UniRule"/>
</dbReference>
<dbReference type="Gene3D" id="3.30.1320.10">
    <property type="match status" value="1"/>
</dbReference>
<dbReference type="HAMAP" id="MF_00385">
    <property type="entry name" value="Ribosomal_bS16"/>
    <property type="match status" value="1"/>
</dbReference>
<dbReference type="InterPro" id="IPR000307">
    <property type="entry name" value="Ribosomal_bS16"/>
</dbReference>
<dbReference type="InterPro" id="IPR023803">
    <property type="entry name" value="Ribosomal_bS16_dom_sf"/>
</dbReference>
<dbReference type="NCBIfam" id="TIGR00002">
    <property type="entry name" value="S16"/>
    <property type="match status" value="1"/>
</dbReference>
<dbReference type="PANTHER" id="PTHR12919">
    <property type="entry name" value="30S RIBOSOMAL PROTEIN S16"/>
    <property type="match status" value="1"/>
</dbReference>
<dbReference type="PANTHER" id="PTHR12919:SF20">
    <property type="entry name" value="SMALL RIBOSOMAL SUBUNIT PROTEIN BS16M"/>
    <property type="match status" value="1"/>
</dbReference>
<dbReference type="Pfam" id="PF00886">
    <property type="entry name" value="Ribosomal_S16"/>
    <property type="match status" value="1"/>
</dbReference>
<dbReference type="SUPFAM" id="SSF54565">
    <property type="entry name" value="Ribosomal protein S16"/>
    <property type="match status" value="1"/>
</dbReference>
<proteinExistence type="inferred from homology"/>
<accession>Q3JQ06</accession>
<comment type="similarity">
    <text evidence="1">Belongs to the bacterial ribosomal protein bS16 family.</text>
</comment>
<protein>
    <recommendedName>
        <fullName evidence="1">Small ribosomal subunit protein bS16</fullName>
    </recommendedName>
    <alternativeName>
        <fullName evidence="2">30S ribosomal protein S16</fullName>
    </alternativeName>
</protein>
<feature type="chain" id="PRO_0000243787" description="Small ribosomal subunit protein bS16">
    <location>
        <begin position="1"/>
        <end position="84"/>
    </location>
</feature>
<evidence type="ECO:0000255" key="1">
    <source>
        <dbReference type="HAMAP-Rule" id="MF_00385"/>
    </source>
</evidence>
<evidence type="ECO:0000305" key="2"/>
<gene>
    <name evidence="1" type="primary">rpsP</name>
    <name type="ordered locus">BURPS1710b_2968</name>
</gene>
<sequence>MVIIRLARGGSKKRPFYNIVATDSRNRRDGRFIERVGFYNPVATKGEALRIAQDRLTYWQGVGAQLSPTVERLVKQAQKAQPAA</sequence>
<organism>
    <name type="scientific">Burkholderia pseudomallei (strain 1710b)</name>
    <dbReference type="NCBI Taxonomy" id="320372"/>
    <lineage>
        <taxon>Bacteria</taxon>
        <taxon>Pseudomonadati</taxon>
        <taxon>Pseudomonadota</taxon>
        <taxon>Betaproteobacteria</taxon>
        <taxon>Burkholderiales</taxon>
        <taxon>Burkholderiaceae</taxon>
        <taxon>Burkholderia</taxon>
        <taxon>pseudomallei group</taxon>
    </lineage>
</organism>